<comment type="function">
    <text evidence="1">Shows three enzymatic activities that share a first common step, the attack of thiamine-PP on 2-oxoglutarate (alpha-ketoglutarate, KG), leading to the formation of an enamine-thiamine-PP intermediate upon decarboxylation. Thus, displays KGD activity, catalyzing the decarboxylation from five-carbon 2-oxoglutarate to four-carbon succinate semialdehyde (SSA). Also catalyzes C-C bond formation between the activated aldehyde formed after decarboxylation of alpha-ketoglutarate and the carbonyl of glyoxylate (GLX), to yield 2-hydroxy-3-oxoadipate (HOA), which spontaneously decarboxylates to form 5-hydroxylevulinate (HLA). And is also a component of the 2-oxoglutarate dehydrogenase (ODH) complex, that catalyzes the overall conversion of 2-oxoglutarate to succinyl-CoA and CO(2). The KG decarboxylase and KG dehydrogenase reactions provide two alternative, tightly regulated, pathways connecting the oxidative and reductive branches of the TCA cycle (By similarity).</text>
</comment>
<comment type="catalytic activity">
    <reaction>
        <text>glyoxylate + 2-oxoglutarate + H(+) = 2-hydroxy-3-oxoadipate + CO2</text>
        <dbReference type="Rhea" id="RHEA:14341"/>
        <dbReference type="ChEBI" id="CHEBI:15378"/>
        <dbReference type="ChEBI" id="CHEBI:16526"/>
        <dbReference type="ChEBI" id="CHEBI:16810"/>
        <dbReference type="ChEBI" id="CHEBI:36655"/>
        <dbReference type="ChEBI" id="CHEBI:57712"/>
        <dbReference type="EC" id="2.2.1.5"/>
    </reaction>
</comment>
<comment type="catalytic activity">
    <reaction>
        <text>2-oxoglutarate + H(+) = succinate semialdehyde + CO2</text>
        <dbReference type="Rhea" id="RHEA:10524"/>
        <dbReference type="ChEBI" id="CHEBI:15378"/>
        <dbReference type="ChEBI" id="CHEBI:16526"/>
        <dbReference type="ChEBI" id="CHEBI:16810"/>
        <dbReference type="ChEBI" id="CHEBI:57706"/>
        <dbReference type="EC" id="4.1.1.71"/>
    </reaction>
</comment>
<comment type="catalytic activity">
    <reaction>
        <text>N(6)-[(R)-lipoyl]-L-lysyl-[protein] + 2-oxoglutarate + H(+) = N(6)-[(R)-S(8)-succinyldihydrolipoyl]-L-lysyl-[protein] + CO2</text>
        <dbReference type="Rhea" id="RHEA:12188"/>
        <dbReference type="Rhea" id="RHEA-COMP:10474"/>
        <dbReference type="Rhea" id="RHEA-COMP:20092"/>
        <dbReference type="ChEBI" id="CHEBI:15378"/>
        <dbReference type="ChEBI" id="CHEBI:16526"/>
        <dbReference type="ChEBI" id="CHEBI:16810"/>
        <dbReference type="ChEBI" id="CHEBI:83099"/>
        <dbReference type="ChEBI" id="CHEBI:83120"/>
        <dbReference type="EC" id="1.2.4.2"/>
    </reaction>
</comment>
<comment type="catalytic activity">
    <reaction>
        <text>N(6)-[(R)-dihydrolipoyl]-L-lysyl-[protein] + succinyl-CoA = N(6)-[(R)-S(8)-succinyldihydrolipoyl]-L-lysyl-[protein] + CoA</text>
        <dbReference type="Rhea" id="RHEA:15213"/>
        <dbReference type="Rhea" id="RHEA-COMP:10475"/>
        <dbReference type="Rhea" id="RHEA-COMP:20092"/>
        <dbReference type="ChEBI" id="CHEBI:57287"/>
        <dbReference type="ChEBI" id="CHEBI:57292"/>
        <dbReference type="ChEBI" id="CHEBI:83100"/>
        <dbReference type="ChEBI" id="CHEBI:83120"/>
        <dbReference type="EC" id="2.3.1.61"/>
    </reaction>
</comment>
<comment type="cofactor">
    <cofactor evidence="1">
        <name>Mg(2+)</name>
        <dbReference type="ChEBI" id="CHEBI:18420"/>
    </cofactor>
</comment>
<comment type="cofactor">
    <cofactor evidence="1">
        <name>thiamine diphosphate</name>
        <dbReference type="ChEBI" id="CHEBI:58937"/>
    </cofactor>
</comment>
<comment type="activity regulation">
    <text evidence="1">Alpha-ketoglutarate dehydrogenase and decarboxylase activities are inhibited by unphosphorylated GarA, and allosterically activated by acetyl-CoA, the main substrate of the TCA cycle.</text>
</comment>
<comment type="pathway">
    <text>Carbohydrate metabolism; tricarboxylic acid cycle; succinate from 2-oxoglutarate (transferase route): step 1/2.</text>
</comment>
<comment type="pathway">
    <text>Carbohydrate metabolism; tricarboxylic acid cycle; succinyl-CoA from 2-oxoglutarate (dehydrogenase route): step 1/1.</text>
</comment>
<comment type="subunit">
    <text evidence="1">Homodimer. The 2-oxoglutarate dehydrogenase (ODH) complex contains multiple copies of three enzymatic components: 2-oxoglutarate dehydrogenase (E1), dihydrolipoamide succinyltransferase (E2) and lipoamide dehydrogenase (E3) (By similarity).</text>
</comment>
<comment type="domain">
    <text evidence="1">Is a fusion protein with two major domains exhibiting structural features of an E1 and E2 protein, and a short sequence stretch of E1 localized at the N-terminus, which is connected by a linker region to the rest of the protein.</text>
</comment>
<comment type="similarity">
    <text evidence="5">Belongs to the 2-oxoacid dehydrogenase family. Kgd subfamily.</text>
</comment>
<comment type="sequence caution" evidence="5">
    <conflict type="erroneous initiation">
        <sequence resource="EMBL-CDS" id="CAL71295"/>
    </conflict>
</comment>
<reference key="1">
    <citation type="journal article" date="2007" name="Proc. Natl. Acad. Sci. U.S.A.">
        <title>Genome plasticity of BCG and impact on vaccine efficacy.</title>
        <authorList>
            <person name="Brosch R."/>
            <person name="Gordon S.V."/>
            <person name="Garnier T."/>
            <person name="Eiglmeier K."/>
            <person name="Frigui W."/>
            <person name="Valenti P."/>
            <person name="Dos Santos S."/>
            <person name="Duthoy S."/>
            <person name="Lacroix C."/>
            <person name="Garcia-Pelayo C."/>
            <person name="Inwald J.K."/>
            <person name="Golby P."/>
            <person name="Garcia J.N."/>
            <person name="Hewinson R.G."/>
            <person name="Behr M.A."/>
            <person name="Quail M.A."/>
            <person name="Churcher C."/>
            <person name="Barrell B.G."/>
            <person name="Parkhill J."/>
            <person name="Cole S.T."/>
        </authorList>
    </citation>
    <scope>NUCLEOTIDE SEQUENCE [LARGE SCALE GENOMIC DNA]</scope>
    <source>
        <strain>BCG / Pasteur 1173P2</strain>
    </source>
</reference>
<keyword id="KW-0012">Acyltransferase</keyword>
<keyword id="KW-0021">Allosteric enzyme</keyword>
<keyword id="KW-0175">Coiled coil</keyword>
<keyword id="KW-0210">Decarboxylase</keyword>
<keyword id="KW-0456">Lyase</keyword>
<keyword id="KW-0460">Magnesium</keyword>
<keyword id="KW-0479">Metal-binding</keyword>
<keyword id="KW-0511">Multifunctional enzyme</keyword>
<keyword id="KW-0560">Oxidoreductase</keyword>
<keyword id="KW-0786">Thiamine pyrophosphate</keyword>
<keyword id="KW-0808">Transferase</keyword>
<keyword id="KW-0816">Tricarboxylic acid cycle</keyword>
<protein>
    <recommendedName>
        <fullName>Multifunctional 2-oxoglutarate metabolism enzyme</fullName>
    </recommendedName>
    <alternativeName>
        <fullName>2-hydroxy-3-oxoadipate synthase</fullName>
        <shortName>HOA synthase</shortName>
        <shortName>HOAS</shortName>
        <ecNumber>2.2.1.5</ecNumber>
    </alternativeName>
    <alternativeName>
        <fullName>2-oxoglutarate carboxy-lyase</fullName>
    </alternativeName>
    <alternativeName>
        <fullName>2-oxoglutarate decarboxylase</fullName>
    </alternativeName>
    <alternativeName>
        <fullName>Alpha-ketoglutarate decarboxylase</fullName>
        <shortName>KG decarboxylase</shortName>
        <shortName>KGD</shortName>
        <ecNumber>4.1.1.71</ecNumber>
    </alternativeName>
    <alternativeName>
        <fullName>Alpha-ketoglutarate-glyoxylate carboligase</fullName>
    </alternativeName>
    <domain>
        <recommendedName>
            <fullName>2-oxoglutarate dehydrogenase E1 component</fullName>
            <shortName>ODH E1 component</shortName>
            <ecNumber>1.2.4.2</ecNumber>
        </recommendedName>
        <alternativeName>
            <fullName>Alpha-ketoglutarate dehydrogenase E1 component</fullName>
            <shortName>KDH E1 component</shortName>
        </alternativeName>
    </domain>
    <domain>
        <recommendedName>
            <fullName>Dihydrolipoyllysine-residue succinyltransferase component of 2-oxoglutarate dehydrogenase complex</fullName>
            <ecNumber>2.3.1.61</ecNumber>
        </recommendedName>
        <alternativeName>
            <fullName>2-oxoglutarate dehydrogenase complex E2 component</fullName>
            <shortName>ODH E2 component</shortName>
            <shortName>OGDC-E2</shortName>
        </alternativeName>
        <alternativeName>
            <fullName>Dihydrolipoamide succinyltransferase</fullName>
        </alternativeName>
    </domain>
</protein>
<gene>
    <name type="primary">kgd</name>
    <name type="ordered locus">BCG_1308c</name>
</gene>
<feature type="chain" id="PRO_0000310715" description="Multifunctional 2-oxoglutarate metabolism enzyme">
    <location>
        <begin position="1"/>
        <end position="1231"/>
    </location>
</feature>
<feature type="region of interest" description="2-oxoglutarate dehydrogenase E1, N-terminal part">
    <location>
        <begin position="1"/>
        <end position="41"/>
    </location>
</feature>
<feature type="region of interest" description="Disordered" evidence="4">
    <location>
        <begin position="24"/>
        <end position="56"/>
    </location>
</feature>
<feature type="region of interest" description="Linker">
    <location>
        <begin position="42"/>
        <end position="88"/>
    </location>
</feature>
<feature type="region of interest" description="Succinyltransferase E2">
    <location>
        <begin position="89"/>
        <end position="337"/>
    </location>
</feature>
<feature type="region of interest" description="2-oxoglutarate dehydrogenase E1, C-terminal part">
    <location>
        <begin position="338"/>
        <end position="1231"/>
    </location>
</feature>
<feature type="coiled-coil region" evidence="3">
    <location>
        <begin position="787"/>
        <end position="817"/>
    </location>
</feature>
<feature type="compositionally biased region" description="Basic and acidic residues" evidence="4">
    <location>
        <begin position="24"/>
        <end position="37"/>
    </location>
</feature>
<feature type="active site" description="Proton acceptor; for succinyltransferase activity" evidence="1">
    <location>
        <position position="316"/>
    </location>
</feature>
<feature type="binding site" evidence="2">
    <location>
        <position position="542"/>
    </location>
    <ligand>
        <name>thiamine diphosphate</name>
        <dbReference type="ChEBI" id="CHEBI:58937"/>
    </ligand>
</feature>
<feature type="binding site" evidence="2">
    <location>
        <position position="581"/>
    </location>
    <ligand>
        <name>2-oxoglutarate</name>
        <dbReference type="ChEBI" id="CHEBI:16810"/>
    </ligand>
</feature>
<feature type="binding site" evidence="2">
    <location>
        <position position="606"/>
    </location>
    <ligand>
        <name>2-oxoglutarate</name>
        <dbReference type="ChEBI" id="CHEBI:16810"/>
    </ligand>
</feature>
<feature type="binding site" evidence="2">
    <location>
        <position position="606"/>
    </location>
    <ligand>
        <name>thiamine diphosphate</name>
        <dbReference type="ChEBI" id="CHEBI:58937"/>
    </ligand>
</feature>
<feature type="binding site" evidence="2">
    <location>
        <position position="608"/>
    </location>
    <ligand>
        <name>thiamine diphosphate</name>
        <dbReference type="ChEBI" id="CHEBI:58937"/>
    </ligand>
</feature>
<feature type="binding site" evidence="2">
    <location>
        <position position="649"/>
    </location>
    <ligand>
        <name>Mg(2+)</name>
        <dbReference type="ChEBI" id="CHEBI:18420"/>
    </ligand>
</feature>
<feature type="binding site" evidence="2">
    <location>
        <position position="649"/>
    </location>
    <ligand>
        <name>thiamine diphosphate</name>
        <dbReference type="ChEBI" id="CHEBI:58937"/>
    </ligand>
</feature>
<feature type="binding site" evidence="2">
    <location>
        <position position="650"/>
    </location>
    <ligand>
        <name>thiamine diphosphate</name>
        <dbReference type="ChEBI" id="CHEBI:58937"/>
    </ligand>
</feature>
<feature type="binding site" evidence="2">
    <location>
        <position position="651"/>
    </location>
    <ligand>
        <name>thiamine diphosphate</name>
        <dbReference type="ChEBI" id="CHEBI:58937"/>
    </ligand>
</feature>
<feature type="binding site" evidence="2">
    <location>
        <position position="682"/>
    </location>
    <ligand>
        <name>Mg(2+)</name>
        <dbReference type="ChEBI" id="CHEBI:18420"/>
    </ligand>
</feature>
<feature type="binding site" evidence="2">
    <location>
        <position position="682"/>
    </location>
    <ligand>
        <name>thiamine diphosphate</name>
        <dbReference type="ChEBI" id="CHEBI:58937"/>
    </ligand>
</feature>
<feature type="binding site" evidence="2">
    <location>
        <position position="684"/>
    </location>
    <ligand>
        <name>Mg(2+)</name>
        <dbReference type="ChEBI" id="CHEBI:18420"/>
    </ligand>
</feature>
<feature type="binding site" evidence="2">
    <location>
        <position position="1024"/>
    </location>
    <ligand>
        <name>2-oxoglutarate</name>
        <dbReference type="ChEBI" id="CHEBI:16810"/>
    </ligand>
</feature>
<feature type="binding site" evidence="2">
    <location>
        <position position="1042"/>
    </location>
    <ligand>
        <name>acetyl-CoA</name>
        <dbReference type="ChEBI" id="CHEBI:57288"/>
        <note>allosteric activator</note>
    </ligand>
</feature>
<feature type="binding site" evidence="2">
    <location>
        <position position="1058"/>
    </location>
    <ligand>
        <name>acetyl-CoA</name>
        <dbReference type="ChEBI" id="CHEBI:57288"/>
        <note>allosteric activator</note>
    </ligand>
</feature>
<feature type="binding site" evidence="2">
    <location>
        <position position="1093"/>
    </location>
    <ligand>
        <name>acetyl-CoA</name>
        <dbReference type="ChEBI" id="CHEBI:57288"/>
        <note>allosteric activator</note>
    </ligand>
</feature>
<feature type="binding site" evidence="2">
    <location>
        <position position="1096"/>
    </location>
    <ligand>
        <name>acetyl-CoA</name>
        <dbReference type="ChEBI" id="CHEBI:57288"/>
        <note>allosteric activator</note>
    </ligand>
</feature>
<feature type="binding site" evidence="2">
    <location>
        <position position="1146"/>
    </location>
    <ligand>
        <name>acetyl-CoA</name>
        <dbReference type="ChEBI" id="CHEBI:57288"/>
        <note>allosteric activator</note>
    </ligand>
</feature>
<feature type="binding site" evidence="2">
    <location>
        <position position="1153"/>
    </location>
    <ligand>
        <name>acetyl-CoA</name>
        <dbReference type="ChEBI" id="CHEBI:57288"/>
        <note>allosteric activator</note>
    </ligand>
</feature>
<feature type="binding site" evidence="2">
    <location>
        <position position="1154"/>
    </location>
    <ligand>
        <name>acetyl-CoA</name>
        <dbReference type="ChEBI" id="CHEBI:57288"/>
        <note>allosteric activator</note>
    </ligand>
</feature>
<name>KGD_MYCBP</name>
<proteinExistence type="inferred from homology"/>
<accession>A1KI36</accession>
<organism>
    <name type="scientific">Mycobacterium bovis (strain BCG / Pasteur 1173P2)</name>
    <dbReference type="NCBI Taxonomy" id="410289"/>
    <lineage>
        <taxon>Bacteria</taxon>
        <taxon>Bacillati</taxon>
        <taxon>Actinomycetota</taxon>
        <taxon>Actinomycetes</taxon>
        <taxon>Mycobacteriales</taxon>
        <taxon>Mycobacteriaceae</taxon>
        <taxon>Mycobacterium</taxon>
        <taxon>Mycobacterium tuberculosis complex</taxon>
    </lineage>
</organism>
<sequence length="1231" mass="135876">MANISSPFGQNEWLVEAMYRKFRDDPSSVDPSWHEFLVDYSPEPTSQPAAEPTRVTSPLVAERAAAAAPQAPPKPADTAAAGNGVVAALAAKTAVPPPAEGDEVAVLRGAAAAVVKNMSASLEVPTATSVRAVPAKLLIDNRIVINNQLKRTRGGKISFTHLLGYALVQAVKKFPNMNRHYTEVDGKPTAVTPAHTNLGLAIDLQGKDGKRSLVVAGIKRCETMRFAQFVTAYEDIVRRARDGKLTTEDFAGVTISLTNPGTIGTVHSVPRLMPGQGAIIGVGAMEYPAEFQGASEERIAELGIGKLITLTSTYDHRIIQGAESGDFLRTIHELLLSDGFWDEVFRELSIPYLPVRWSTDNPDSIVDKNARVMNLIAAYRNRGHLMADTDPLRLDKARFRSHPDLEVLTHGLTLWDLDRVFKVDGFAGAQYKKLRDVLGLLRDAYCRHIGVEYAHILDPEQKEWLEQRVETKHVKPTVAQQKYILSKLNAAEAFETFLQTKYVGQKRFSLEGAESVIPMMDAAIDQCAEHGLDEVVIGMPHRGRLNVLANIVGKPYSQIFTEFEGNLNPSQAHGSGDVKYHLGATGLYLQMFGDNDIQVSLTANPSHLEAVDPVLEGLVRAKQDLLDHGSIDSDGQRAFSVVPLMLHGDAAFAGQGVVAETLNLANLPGYRVGGTIHIIVNNQIGFTTAPEYSRSSEYCTDVAKMIGAPIFHVNGDDPEACVWVARLAVDFRQRFKKDVVIDMLCYRRRGHNEGDDPSMTNPYMYDVVDTKRGARKSYTEALIGRGDISMKEAEDALRDYQGQLERVFNEVRELEKHGVQPSESVESDQMIPAGLATAVDKSLLARIGDAFLALPNGFTAHPRVQPVLEKRREMAYEGKIDWAFGELLALGSLVAEGKLVRLSGQDSRRGTFSQRHSVLIDRHTGEEFTPLQLLATNSDGSPTGGKFLVYDSPLSEYAAVGFEYGYTVGNPDAVVLWEAQFGDFVNGAQSIIDEFISSGEAKWGQLSNVVLLLPHGHEGQGPDHTSARIERFLQLWAEGSMTIAMPSTPSNYFHLLRRHALDGIQRPLIVFTPKSMLRHKAAVSEIKDFTEIKFRSVLEEPTYEDGIGDRNKVSRILLTSGKLYYELAARKAKDNRNDLAIVRLEQLAPLPRRRLRETLDRYENVKEFFWVQEEPANQGAWPRFGLELPELLPDKLAGIKRISRRAMSAPSSGSSKVHAVEQQEILDEAFG</sequence>
<dbReference type="EC" id="2.2.1.5"/>
<dbReference type="EC" id="4.1.1.71"/>
<dbReference type="EC" id="1.2.4.2"/>
<dbReference type="EC" id="2.3.1.61"/>
<dbReference type="EMBL" id="AM408590">
    <property type="protein sequence ID" value="CAL71295.1"/>
    <property type="status" value="ALT_INIT"/>
    <property type="molecule type" value="Genomic_DNA"/>
</dbReference>
<dbReference type="RefSeq" id="WP_010950509.1">
    <property type="nucleotide sequence ID" value="NC_008769.1"/>
</dbReference>
<dbReference type="SMR" id="A1KI36"/>
<dbReference type="KEGG" id="mbb:BCG_1308c"/>
<dbReference type="HOGENOM" id="CLU_004709_1_0_11"/>
<dbReference type="UniPathway" id="UPA00223">
    <property type="reaction ID" value="UER00997"/>
</dbReference>
<dbReference type="UniPathway" id="UPA00223">
    <property type="reaction ID" value="UER01001"/>
</dbReference>
<dbReference type="Proteomes" id="UP000001472">
    <property type="component" value="Chromosome"/>
</dbReference>
<dbReference type="GO" id="GO:0005829">
    <property type="term" value="C:cytosol"/>
    <property type="evidence" value="ECO:0007669"/>
    <property type="project" value="TreeGrafter"/>
</dbReference>
<dbReference type="GO" id="GO:0045252">
    <property type="term" value="C:oxoglutarate dehydrogenase complex"/>
    <property type="evidence" value="ECO:0007669"/>
    <property type="project" value="TreeGrafter"/>
</dbReference>
<dbReference type="GO" id="GO:0050439">
    <property type="term" value="F:2-hydroxy-3-oxoadipate synthase activity"/>
    <property type="evidence" value="ECO:0007669"/>
    <property type="project" value="UniProtKB-EC"/>
</dbReference>
<dbReference type="GO" id="GO:0008683">
    <property type="term" value="F:2-oxoglutarate decarboxylase activity"/>
    <property type="evidence" value="ECO:0007669"/>
    <property type="project" value="UniProtKB-EC"/>
</dbReference>
<dbReference type="GO" id="GO:0004149">
    <property type="term" value="F:dihydrolipoyllysine-residue succinyltransferase activity"/>
    <property type="evidence" value="ECO:0007669"/>
    <property type="project" value="UniProtKB-EC"/>
</dbReference>
<dbReference type="GO" id="GO:0000287">
    <property type="term" value="F:magnesium ion binding"/>
    <property type="evidence" value="ECO:0007669"/>
    <property type="project" value="UniProtKB-ARBA"/>
</dbReference>
<dbReference type="GO" id="GO:0004591">
    <property type="term" value="F:oxoglutarate dehydrogenase (succinyl-transferring) activity"/>
    <property type="evidence" value="ECO:0007669"/>
    <property type="project" value="UniProtKB-EC"/>
</dbReference>
<dbReference type="GO" id="GO:0030976">
    <property type="term" value="F:thiamine pyrophosphate binding"/>
    <property type="evidence" value="ECO:0007669"/>
    <property type="project" value="InterPro"/>
</dbReference>
<dbReference type="GO" id="GO:0006099">
    <property type="term" value="P:tricarboxylic acid cycle"/>
    <property type="evidence" value="ECO:0007669"/>
    <property type="project" value="UniProtKB-UniPathway"/>
</dbReference>
<dbReference type="CDD" id="cd02016">
    <property type="entry name" value="TPP_E1_OGDC_like"/>
    <property type="match status" value="1"/>
</dbReference>
<dbReference type="FunFam" id="3.30.559.10:FF:000011">
    <property type="entry name" value="2-oxoglutarate dehydrogenase E1 component"/>
    <property type="match status" value="1"/>
</dbReference>
<dbReference type="FunFam" id="3.40.50.11610:FF:000002">
    <property type="entry name" value="2-oxoglutarate dehydrogenase E1 component"/>
    <property type="match status" value="1"/>
</dbReference>
<dbReference type="FunFam" id="3.40.50.970:FF:000018">
    <property type="entry name" value="2-oxoglutarate dehydrogenase E1 component"/>
    <property type="match status" value="1"/>
</dbReference>
<dbReference type="Gene3D" id="3.40.50.12470">
    <property type="match status" value="1"/>
</dbReference>
<dbReference type="Gene3D" id="3.40.50.970">
    <property type="match status" value="1"/>
</dbReference>
<dbReference type="Gene3D" id="3.30.559.10">
    <property type="entry name" value="Chloramphenicol acetyltransferase-like domain"/>
    <property type="match status" value="1"/>
</dbReference>
<dbReference type="Gene3D" id="3.40.50.11610">
    <property type="entry name" value="Multifunctional 2-oxoglutarate metabolism enzyme, C-terminal domain"/>
    <property type="match status" value="1"/>
</dbReference>
<dbReference type="Gene3D" id="1.10.287.1150">
    <property type="entry name" value="TPP helical domain"/>
    <property type="match status" value="1"/>
</dbReference>
<dbReference type="InterPro" id="IPR001078">
    <property type="entry name" value="2-oxoacid_DH_actylTfrase"/>
</dbReference>
<dbReference type="InterPro" id="IPR032106">
    <property type="entry name" value="2-oxogl_dehyd_N"/>
</dbReference>
<dbReference type="InterPro" id="IPR011603">
    <property type="entry name" value="2oxoglutarate_DH_E1"/>
</dbReference>
<dbReference type="InterPro" id="IPR023213">
    <property type="entry name" value="CAT-like_dom_sf"/>
</dbReference>
<dbReference type="InterPro" id="IPR001017">
    <property type="entry name" value="DH_E1"/>
</dbReference>
<dbReference type="InterPro" id="IPR042179">
    <property type="entry name" value="KGD_C_sf"/>
</dbReference>
<dbReference type="InterPro" id="IPR031717">
    <property type="entry name" value="ODO-1/KGD_C"/>
</dbReference>
<dbReference type="InterPro" id="IPR029061">
    <property type="entry name" value="THDP-binding"/>
</dbReference>
<dbReference type="InterPro" id="IPR005475">
    <property type="entry name" value="Transketolase-like_Pyr-bd"/>
</dbReference>
<dbReference type="NCBIfam" id="TIGR00239">
    <property type="entry name" value="2oxo_dh_E1"/>
    <property type="match status" value="1"/>
</dbReference>
<dbReference type="NCBIfam" id="NF006914">
    <property type="entry name" value="PRK09404.1"/>
    <property type="match status" value="1"/>
</dbReference>
<dbReference type="NCBIfam" id="NF008907">
    <property type="entry name" value="PRK12270.1"/>
    <property type="match status" value="1"/>
</dbReference>
<dbReference type="PANTHER" id="PTHR23152:SF4">
    <property type="entry name" value="2-OXOADIPATE DEHYDROGENASE COMPLEX COMPONENT E1"/>
    <property type="match status" value="1"/>
</dbReference>
<dbReference type="PANTHER" id="PTHR23152">
    <property type="entry name" value="2-OXOGLUTARATE DEHYDROGENASE"/>
    <property type="match status" value="1"/>
</dbReference>
<dbReference type="Pfam" id="PF00198">
    <property type="entry name" value="2-oxoacid_dh"/>
    <property type="match status" value="1"/>
</dbReference>
<dbReference type="Pfam" id="PF16078">
    <property type="entry name" value="2-oxogl_dehyd_N"/>
    <property type="match status" value="1"/>
</dbReference>
<dbReference type="Pfam" id="PF00676">
    <property type="entry name" value="E1_dh"/>
    <property type="match status" value="1"/>
</dbReference>
<dbReference type="Pfam" id="PF16870">
    <property type="entry name" value="OxoGdeHyase_C"/>
    <property type="match status" value="1"/>
</dbReference>
<dbReference type="Pfam" id="PF02779">
    <property type="entry name" value="Transket_pyr"/>
    <property type="match status" value="1"/>
</dbReference>
<dbReference type="PIRSF" id="PIRSF000157">
    <property type="entry name" value="Oxoglu_dh_E1"/>
    <property type="match status" value="1"/>
</dbReference>
<dbReference type="SMART" id="SM00861">
    <property type="entry name" value="Transket_pyr"/>
    <property type="match status" value="1"/>
</dbReference>
<dbReference type="SUPFAM" id="SSF52777">
    <property type="entry name" value="CoA-dependent acyltransferases"/>
    <property type="match status" value="1"/>
</dbReference>
<dbReference type="SUPFAM" id="SSF52518">
    <property type="entry name" value="Thiamin diphosphate-binding fold (THDP-binding)"/>
    <property type="match status" value="2"/>
</dbReference>
<evidence type="ECO:0000250" key="1"/>
<evidence type="ECO:0000250" key="2">
    <source>
        <dbReference type="UniProtKB" id="A0R2B1"/>
    </source>
</evidence>
<evidence type="ECO:0000255" key="3"/>
<evidence type="ECO:0000256" key="4">
    <source>
        <dbReference type="SAM" id="MobiDB-lite"/>
    </source>
</evidence>
<evidence type="ECO:0000305" key="5"/>